<gene>
    <name type="primary">cinB</name>
    <name type="synonym">H5</name>
    <name type="ORF">DDB_G0291121</name>
</gene>
<dbReference type="EMBL" id="AAFI02000175">
    <property type="protein sequence ID" value="EAL61844.1"/>
    <property type="molecule type" value="Genomic_DNA"/>
</dbReference>
<dbReference type="EMBL" id="X15387">
    <property type="protein sequence ID" value="CAA33445.1"/>
    <property type="status" value="ALT_INIT"/>
    <property type="molecule type" value="mRNA"/>
</dbReference>
<dbReference type="PIR" id="S07569">
    <property type="entry name" value="S07569"/>
</dbReference>
<dbReference type="RefSeq" id="XP_635362.1">
    <property type="nucleotide sequence ID" value="XM_630270.1"/>
</dbReference>
<dbReference type="SMR" id="P14326"/>
<dbReference type="FunCoup" id="P14326">
    <property type="interactions" value="26"/>
</dbReference>
<dbReference type="STRING" id="44689.P14326"/>
<dbReference type="ESTHER" id="dicdi-cinbp">
    <property type="family name" value="Hormone-sensitive_lipase_like"/>
</dbReference>
<dbReference type="MEROPS" id="S09.A97"/>
<dbReference type="PaxDb" id="44689-DDB0220110"/>
<dbReference type="EnsemblProtists" id="EAL61844">
    <property type="protein sequence ID" value="EAL61844"/>
    <property type="gene ID" value="DDB_G0291121"/>
</dbReference>
<dbReference type="GeneID" id="8628010"/>
<dbReference type="KEGG" id="ddi:DDB_G0291121"/>
<dbReference type="dictyBase" id="DDB_G0291121">
    <property type="gene designation" value="cinB"/>
</dbReference>
<dbReference type="VEuPathDB" id="AmoebaDB:DDB_G0291121"/>
<dbReference type="eggNOG" id="KOG1515">
    <property type="taxonomic scope" value="Eukaryota"/>
</dbReference>
<dbReference type="HOGENOM" id="CLU_012494_6_0_1"/>
<dbReference type="InParanoid" id="P14326"/>
<dbReference type="OMA" id="QWLIYPR"/>
<dbReference type="PhylomeDB" id="P14326"/>
<dbReference type="PRO" id="PR:P14326"/>
<dbReference type="Proteomes" id="UP000002195">
    <property type="component" value="Chromosome 5"/>
</dbReference>
<dbReference type="GO" id="GO:0045335">
    <property type="term" value="C:phagocytic vesicle"/>
    <property type="evidence" value="ECO:0007005"/>
    <property type="project" value="dictyBase"/>
</dbReference>
<dbReference type="GO" id="GO:0016787">
    <property type="term" value="F:hydrolase activity"/>
    <property type="evidence" value="ECO:0007669"/>
    <property type="project" value="UniProtKB-KW"/>
</dbReference>
<dbReference type="FunFam" id="3.40.50.1820:FF:000762">
    <property type="entry name" value="Vegetative-specific protein H5"/>
    <property type="match status" value="1"/>
</dbReference>
<dbReference type="Gene3D" id="3.40.50.1820">
    <property type="entry name" value="alpha/beta hydrolase"/>
    <property type="match status" value="1"/>
</dbReference>
<dbReference type="InterPro" id="IPR013094">
    <property type="entry name" value="AB_hydrolase_3"/>
</dbReference>
<dbReference type="InterPro" id="IPR029058">
    <property type="entry name" value="AB_hydrolase_fold"/>
</dbReference>
<dbReference type="InterPro" id="IPR050300">
    <property type="entry name" value="GDXG_lipolytic_enzyme"/>
</dbReference>
<dbReference type="PANTHER" id="PTHR48081">
    <property type="entry name" value="AB HYDROLASE SUPERFAMILY PROTEIN C4A8.06C"/>
    <property type="match status" value="1"/>
</dbReference>
<dbReference type="PANTHER" id="PTHR48081:SF8">
    <property type="entry name" value="ALPHA_BETA HYDROLASE FOLD-3 DOMAIN-CONTAINING PROTEIN-RELATED"/>
    <property type="match status" value="1"/>
</dbReference>
<dbReference type="Pfam" id="PF07859">
    <property type="entry name" value="Abhydrolase_3"/>
    <property type="match status" value="1"/>
</dbReference>
<dbReference type="SUPFAM" id="SSF53474">
    <property type="entry name" value="alpha/beta-Hydrolases"/>
    <property type="match status" value="1"/>
</dbReference>
<protein>
    <recommendedName>
        <fullName>Vegetative-specific protein H5</fullName>
    </recommendedName>
</protein>
<feature type="chain" id="PRO_0000071556" description="Vegetative-specific protein H5">
    <location>
        <begin position="1"/>
        <end position="337"/>
    </location>
</feature>
<feature type="short sequence motif" description="Involved in the stabilization of the negatively charged intermediate by the formation of the oxyanion hole" evidence="1">
    <location>
        <begin position="88"/>
        <end position="90"/>
    </location>
</feature>
<feature type="active site" evidence="1">
    <location>
        <position position="161"/>
    </location>
</feature>
<feature type="active site" evidence="1">
    <location>
        <position position="261"/>
    </location>
</feature>
<feature type="active site" evidence="1">
    <location>
        <position position="291"/>
    </location>
</feature>
<feature type="sequence conflict" description="In Ref. 2; CAA33445." evidence="3" ref="2">
    <original>FETPSYNRFSEKFYLTKEG</original>
    <variation>LKHHPIIDLRESINKGS</variation>
    <location>
        <begin position="199"/>
        <end position="217"/>
    </location>
</feature>
<sequence>MDPESFGLDKTAIEICNSYMPVLDIEPRLIREGFKSLYDIQKKHISKTKQYQLNKENGDSLMDVHFFYPSGYEQNPVDHKYKAIFYIHGGGFMVDGIKKLPREISDRTNSILIYPDYGLTPEFKYPLGLKQCYQLFTDIMNGNFNPFNDLINDSISIVGESSGGNFALSLPLMLKLNNSTFFKKISKVLVYYPITDCNFETPSYNRFSEKFYLTKEGMKWCWNHYTNNDSERDEITCCPLKATIDQLKDFPETLVITAETDVLSSEGEQFGLKLSNANVKVSVLRILKTIHGFVSLDQTNDSIACRVGMDLSMNFLNNISNNSIINENNNKTLLKLL</sequence>
<name>VSH5_DICDI</name>
<organism>
    <name type="scientific">Dictyostelium discoideum</name>
    <name type="common">Social amoeba</name>
    <dbReference type="NCBI Taxonomy" id="44689"/>
    <lineage>
        <taxon>Eukaryota</taxon>
        <taxon>Amoebozoa</taxon>
        <taxon>Evosea</taxon>
        <taxon>Eumycetozoa</taxon>
        <taxon>Dictyostelia</taxon>
        <taxon>Dictyosteliales</taxon>
        <taxon>Dictyosteliaceae</taxon>
        <taxon>Dictyostelium</taxon>
    </lineage>
</organism>
<comment type="developmental stage">
    <text evidence="2">This protein is expressed in growing cells and deactivated upon the initiation of development.</text>
</comment>
<comment type="induction">
    <text evidence="2">By cycloheximide.</text>
</comment>
<comment type="similarity">
    <text evidence="3">Belongs to the 'GDXG' lipolytic enzyme family.</text>
</comment>
<comment type="sequence caution" evidence="3">
    <conflict type="erroneous initiation">
        <sequence resource="EMBL-CDS" id="CAA33445"/>
    </conflict>
    <text>Truncated N-terminus.</text>
</comment>
<reference key="1">
    <citation type="journal article" date="2005" name="Nature">
        <title>The genome of the social amoeba Dictyostelium discoideum.</title>
        <authorList>
            <person name="Eichinger L."/>
            <person name="Pachebat J.A."/>
            <person name="Gloeckner G."/>
            <person name="Rajandream M.A."/>
            <person name="Sucgang R."/>
            <person name="Berriman M."/>
            <person name="Song J."/>
            <person name="Olsen R."/>
            <person name="Szafranski K."/>
            <person name="Xu Q."/>
            <person name="Tunggal B."/>
            <person name="Kummerfeld S."/>
            <person name="Madera M."/>
            <person name="Konfortov B.A."/>
            <person name="Rivero F."/>
            <person name="Bankier A.T."/>
            <person name="Lehmann R."/>
            <person name="Hamlin N."/>
            <person name="Davies R."/>
            <person name="Gaudet P."/>
            <person name="Fey P."/>
            <person name="Pilcher K."/>
            <person name="Chen G."/>
            <person name="Saunders D."/>
            <person name="Sodergren E.J."/>
            <person name="Davis P."/>
            <person name="Kerhornou A."/>
            <person name="Nie X."/>
            <person name="Hall N."/>
            <person name="Anjard C."/>
            <person name="Hemphill L."/>
            <person name="Bason N."/>
            <person name="Farbrother P."/>
            <person name="Desany B."/>
            <person name="Just E."/>
            <person name="Morio T."/>
            <person name="Rost R."/>
            <person name="Churcher C.M."/>
            <person name="Cooper J."/>
            <person name="Haydock S."/>
            <person name="van Driessche N."/>
            <person name="Cronin A."/>
            <person name="Goodhead I."/>
            <person name="Muzny D.M."/>
            <person name="Mourier T."/>
            <person name="Pain A."/>
            <person name="Lu M."/>
            <person name="Harper D."/>
            <person name="Lindsay R."/>
            <person name="Hauser H."/>
            <person name="James K.D."/>
            <person name="Quiles M."/>
            <person name="Madan Babu M."/>
            <person name="Saito T."/>
            <person name="Buchrieser C."/>
            <person name="Wardroper A."/>
            <person name="Felder M."/>
            <person name="Thangavelu M."/>
            <person name="Johnson D."/>
            <person name="Knights A."/>
            <person name="Loulseged H."/>
            <person name="Mungall K.L."/>
            <person name="Oliver K."/>
            <person name="Price C."/>
            <person name="Quail M.A."/>
            <person name="Urushihara H."/>
            <person name="Hernandez J."/>
            <person name="Rabbinowitsch E."/>
            <person name="Steffen D."/>
            <person name="Sanders M."/>
            <person name="Ma J."/>
            <person name="Kohara Y."/>
            <person name="Sharp S."/>
            <person name="Simmonds M.N."/>
            <person name="Spiegler S."/>
            <person name="Tivey A."/>
            <person name="Sugano S."/>
            <person name="White B."/>
            <person name="Walker D."/>
            <person name="Woodward J.R."/>
            <person name="Winckler T."/>
            <person name="Tanaka Y."/>
            <person name="Shaulsky G."/>
            <person name="Schleicher M."/>
            <person name="Weinstock G.M."/>
            <person name="Rosenthal A."/>
            <person name="Cox E.C."/>
            <person name="Chisholm R.L."/>
            <person name="Gibbs R.A."/>
            <person name="Loomis W.F."/>
            <person name="Platzer M."/>
            <person name="Kay R.R."/>
            <person name="Williams J.G."/>
            <person name="Dear P.H."/>
            <person name="Noegel A.A."/>
            <person name="Barrell B.G."/>
            <person name="Kuspa A."/>
        </authorList>
    </citation>
    <scope>NUCLEOTIDE SEQUENCE [LARGE SCALE GENOMIC DNA]</scope>
    <source>
        <strain>AX4</strain>
    </source>
</reference>
<reference key="2">
    <citation type="submission" date="1989-05" db="EMBL/GenBank/DDBJ databases">
        <authorList>
            <person name="Singleton C.K."/>
        </authorList>
    </citation>
    <scope>NUCLEOTIDE SEQUENCE [MRNA] OF 5-337</scope>
    <source>
        <strain>AX3</strain>
    </source>
</reference>
<reference key="3">
    <citation type="journal article" date="1988" name="Dev. Genet.">
        <title>Deactivation of gene expression upon the onset of development in Dictyostelium discoideum.</title>
        <authorList>
            <person name="Singleton C.K."/>
            <person name="McPherson C.E."/>
            <person name="Manning S.S."/>
        </authorList>
    </citation>
    <scope>DEVELOPMENTAL STAGE</scope>
    <scope>INDUCTION</scope>
</reference>
<keyword id="KW-0378">Hydrolase</keyword>
<keyword id="KW-1185">Reference proteome</keyword>
<proteinExistence type="evidence at transcript level"/>
<evidence type="ECO:0000250" key="1">
    <source>
        <dbReference type="UniProtKB" id="Q5NUF3"/>
    </source>
</evidence>
<evidence type="ECO:0000269" key="2">
    <source>
    </source>
</evidence>
<evidence type="ECO:0000305" key="3"/>
<accession>P14326</accession>
<accession>Q54F28</accession>